<keyword id="KW-0012">Acyltransferase</keyword>
<keyword id="KW-0444">Lipid biosynthesis</keyword>
<keyword id="KW-0443">Lipid metabolism</keyword>
<keyword id="KW-0472">Membrane</keyword>
<keyword id="KW-0496">Mitochondrion</keyword>
<keyword id="KW-0594">Phospholipid biosynthesis</keyword>
<keyword id="KW-1208">Phospholipid metabolism</keyword>
<keyword id="KW-1185">Reference proteome</keyword>
<keyword id="KW-0808">Transferase</keyword>
<keyword id="KW-0809">Transit peptide</keyword>
<keyword id="KW-0812">Transmembrane</keyword>
<keyword id="KW-1133">Transmembrane helix</keyword>
<proteinExistence type="inferred from homology"/>
<gene>
    <name type="primary">acl-6</name>
    <name type="ORF">F08F3.2</name>
</gene>
<evidence type="ECO:0000250" key="1"/>
<evidence type="ECO:0000255" key="2"/>
<evidence type="ECO:0000305" key="3"/>
<organism>
    <name type="scientific">Caenorhabditis elegans</name>
    <dbReference type="NCBI Taxonomy" id="6239"/>
    <lineage>
        <taxon>Eukaryota</taxon>
        <taxon>Metazoa</taxon>
        <taxon>Ecdysozoa</taxon>
        <taxon>Nematoda</taxon>
        <taxon>Chromadorea</taxon>
        <taxon>Rhabditida</taxon>
        <taxon>Rhabditina</taxon>
        <taxon>Rhabditomorpha</taxon>
        <taxon>Rhabditoidea</taxon>
        <taxon>Rhabditidae</taxon>
        <taxon>Peloderinae</taxon>
        <taxon>Caenorhabditis</taxon>
    </lineage>
</organism>
<reference key="1">
    <citation type="journal article" date="1998" name="Science">
        <title>Genome sequence of the nematode C. elegans: a platform for investigating biology.</title>
        <authorList>
            <consortium name="The C. elegans sequencing consortium"/>
        </authorList>
    </citation>
    <scope>NUCLEOTIDE SEQUENCE [LARGE SCALE GENOMIC DNA]</scope>
    <source>
        <strain>Bristol N2</strain>
    </source>
</reference>
<sequence length="718" mass="82072">MELDVESTSITQLRSHCETCFPLMEEVVPRRERYVDLLEFSNFNGIPYPVVDPSRKPRRFLADFRYSWSIPLIHHYPNVEKDVLSSKRVHRVISKLKEQNDEQKNRAVQFFTEISARLSKFICKCCSYVLYKVFRRLMDKLLVCKEEMEVLYEAEQTGIPMVYLPLHRSHLDYLLITWCNWHFGLKLPHIASGDNLNLSGLGWLLRATGAFFIRRRVDPDDERGKDQLYRAILHSYIEQVLSKDMPIEFFLEGTRSRFGKALTPKNGLISNVVEAVQHGFIKDCYLVPVSYTYDAVVEGIFLHELMGIPKVRESVLGVFRGIFSGFSKSKQCGVVRMHYGRPIRLTEYLATITASLSSNHRTRPVRMTKLSTSFSYRELVPWHRTHSETVDDRTMIRAIGFHVVYEAQMMCSISPVAVVSCLLLAKWRGKVSRSTFERDCEWLCEKIIAEGGDVVGYQSKKTKGSALVKYAFEKLESCVEVTDEYVSPKESHSSFITLAYNKNSVICRFSIKSVIALTIVSRPSGTKLSIDQIVEDALSLCDWLQFEFMFCRPCDSLRELVHNVLGQKEWSDPIHGFLRSEIEDDGFLDAGGALNSGTLRVRDAKSRETLQFFANLVRPFVQSLYLISSFVVSEKCPTEPTSDNNIIRQLCQQSLAGDIDLPFAPLLESINSDSFKNALRVLKDKGLLQRSTPNSTARSGNSRLAELISNLERVLEVK</sequence>
<protein>
    <recommendedName>
        <fullName>Probable glycerol-3-phosphate acyltransferase, mitochondrial</fullName>
        <shortName>GPAT</shortName>
        <ecNumber>2.3.1.15</ecNumber>
    </recommendedName>
</protein>
<name>PLSB_CAEEL</name>
<accession>Q22949</accession>
<dbReference type="EC" id="2.3.1.15"/>
<dbReference type="EMBL" id="FO080663">
    <property type="protein sequence ID" value="CCD65590.1"/>
    <property type="molecule type" value="Genomic_DNA"/>
</dbReference>
<dbReference type="PIR" id="T29448">
    <property type="entry name" value="T29448"/>
</dbReference>
<dbReference type="RefSeq" id="NP_001023769.1">
    <property type="nucleotide sequence ID" value="NM_001028598.5"/>
</dbReference>
<dbReference type="SMR" id="Q22949"/>
<dbReference type="BioGRID" id="43977">
    <property type="interactions" value="1"/>
</dbReference>
<dbReference type="DIP" id="DIP-26239N"/>
<dbReference type="FunCoup" id="Q22949">
    <property type="interactions" value="2031"/>
</dbReference>
<dbReference type="STRING" id="6239.F08F3.2a.1"/>
<dbReference type="iPTMnet" id="Q22949"/>
<dbReference type="PaxDb" id="6239-F08F3.2a"/>
<dbReference type="PeptideAtlas" id="Q22949"/>
<dbReference type="EnsemblMetazoa" id="F08F3.2a.1">
    <property type="protein sequence ID" value="F08F3.2a.1"/>
    <property type="gene ID" value="WBGene00017261"/>
</dbReference>
<dbReference type="GeneID" id="178928"/>
<dbReference type="KEGG" id="cel:CELE_F08F3.2"/>
<dbReference type="UCSC" id="F08F3.2a.1">
    <property type="organism name" value="c. elegans"/>
</dbReference>
<dbReference type="AGR" id="WB:WBGene00017261"/>
<dbReference type="CTD" id="178928"/>
<dbReference type="WormBase" id="F08F3.2a">
    <property type="protein sequence ID" value="CE09258"/>
    <property type="gene ID" value="WBGene00017261"/>
    <property type="gene designation" value="acl-6"/>
</dbReference>
<dbReference type="eggNOG" id="KOG3729">
    <property type="taxonomic scope" value="Eukaryota"/>
</dbReference>
<dbReference type="GeneTree" id="ENSGT00520000055570"/>
<dbReference type="InParanoid" id="Q22949"/>
<dbReference type="OMA" id="RCKHTNE"/>
<dbReference type="OrthoDB" id="5962536at2759"/>
<dbReference type="PhylomeDB" id="Q22949"/>
<dbReference type="Reactome" id="R-CEL-1483166">
    <property type="pathway name" value="Synthesis of PA"/>
</dbReference>
<dbReference type="Reactome" id="R-CEL-75109">
    <property type="pathway name" value="Triglyceride biosynthesis"/>
</dbReference>
<dbReference type="UniPathway" id="UPA00557">
    <property type="reaction ID" value="UER00612"/>
</dbReference>
<dbReference type="PRO" id="PR:Q22949"/>
<dbReference type="Proteomes" id="UP000001940">
    <property type="component" value="Chromosome V"/>
</dbReference>
<dbReference type="Bgee" id="WBGene00017261">
    <property type="expression patterns" value="Expressed in germ line (C elegans) and 4 other cell types or tissues"/>
</dbReference>
<dbReference type="ExpressionAtlas" id="Q22949">
    <property type="expression patterns" value="baseline and differential"/>
</dbReference>
<dbReference type="GO" id="GO:0031966">
    <property type="term" value="C:mitochondrial membrane"/>
    <property type="evidence" value="ECO:0007669"/>
    <property type="project" value="UniProtKB-SubCell"/>
</dbReference>
<dbReference type="GO" id="GO:0005739">
    <property type="term" value="C:mitochondrion"/>
    <property type="evidence" value="ECO:0000314"/>
    <property type="project" value="WormBase"/>
</dbReference>
<dbReference type="GO" id="GO:0005886">
    <property type="term" value="C:plasma membrane"/>
    <property type="evidence" value="ECO:0007669"/>
    <property type="project" value="InterPro"/>
</dbReference>
<dbReference type="GO" id="GO:0004366">
    <property type="term" value="F:glycerol-3-phosphate O-acyltransferase activity"/>
    <property type="evidence" value="ECO:0000318"/>
    <property type="project" value="GO_Central"/>
</dbReference>
<dbReference type="GO" id="GO:0016024">
    <property type="term" value="P:CDP-diacylglycerol biosynthetic process"/>
    <property type="evidence" value="ECO:0007669"/>
    <property type="project" value="UniProtKB-UniPathway"/>
</dbReference>
<dbReference type="GO" id="GO:0006650">
    <property type="term" value="P:glycerophospholipid metabolic process"/>
    <property type="evidence" value="ECO:0000318"/>
    <property type="project" value="GO_Central"/>
</dbReference>
<dbReference type="GO" id="GO:0019432">
    <property type="term" value="P:triglyceride biosynthetic process"/>
    <property type="evidence" value="ECO:0000318"/>
    <property type="project" value="GO_Central"/>
</dbReference>
<dbReference type="CDD" id="cd07993">
    <property type="entry name" value="LPLAT_DHAPAT-like"/>
    <property type="match status" value="1"/>
</dbReference>
<dbReference type="InterPro" id="IPR022284">
    <property type="entry name" value="GPAT/DHAPAT"/>
</dbReference>
<dbReference type="InterPro" id="IPR045520">
    <property type="entry name" value="GPAT/DHAPAT_C"/>
</dbReference>
<dbReference type="InterPro" id="IPR041728">
    <property type="entry name" value="GPAT/DHAPAT_LPLAT"/>
</dbReference>
<dbReference type="InterPro" id="IPR028354">
    <property type="entry name" value="GPAT_PlsB"/>
</dbReference>
<dbReference type="InterPro" id="IPR002123">
    <property type="entry name" value="Plipid/glycerol_acylTrfase"/>
</dbReference>
<dbReference type="PANTHER" id="PTHR12563:SF23">
    <property type="entry name" value="BCDNA.GH07066"/>
    <property type="match status" value="1"/>
</dbReference>
<dbReference type="PANTHER" id="PTHR12563">
    <property type="entry name" value="GLYCEROL-3-PHOSPHATE ACYLTRANSFERASE"/>
    <property type="match status" value="1"/>
</dbReference>
<dbReference type="Pfam" id="PF01553">
    <property type="entry name" value="Acyltransferase"/>
    <property type="match status" value="1"/>
</dbReference>
<dbReference type="Pfam" id="PF19277">
    <property type="entry name" value="GPAT_C"/>
    <property type="match status" value="1"/>
</dbReference>
<dbReference type="PIRSF" id="PIRSF500064">
    <property type="entry name" value="GPAT"/>
    <property type="match status" value="1"/>
</dbReference>
<dbReference type="PIRSF" id="PIRSF000437">
    <property type="entry name" value="GPAT_DHAPAT"/>
    <property type="match status" value="1"/>
</dbReference>
<dbReference type="SMART" id="SM00563">
    <property type="entry name" value="PlsC"/>
    <property type="match status" value="1"/>
</dbReference>
<dbReference type="SUPFAM" id="SSF69593">
    <property type="entry name" value="Glycerol-3-phosphate (1)-acyltransferase"/>
    <property type="match status" value="1"/>
</dbReference>
<comment type="catalytic activity">
    <reaction>
        <text>sn-glycerol 3-phosphate + an acyl-CoA = a 1-acyl-sn-glycero-3-phosphate + CoA</text>
        <dbReference type="Rhea" id="RHEA:15325"/>
        <dbReference type="ChEBI" id="CHEBI:57287"/>
        <dbReference type="ChEBI" id="CHEBI:57597"/>
        <dbReference type="ChEBI" id="CHEBI:57970"/>
        <dbReference type="ChEBI" id="CHEBI:58342"/>
        <dbReference type="EC" id="2.3.1.15"/>
    </reaction>
</comment>
<comment type="pathway">
    <text>Phospholipid metabolism; CDP-diacylglycerol biosynthesis; CDP-diacylglycerol from sn-glycerol 3-phosphate: step 1/3.</text>
</comment>
<comment type="subcellular location">
    <subcellularLocation>
        <location evidence="3">Mitochondrion membrane</location>
        <topology evidence="3">Single-pass membrane protein</topology>
    </subcellularLocation>
</comment>
<comment type="domain">
    <text evidence="1">The HXXXXD motif is essential for acyltransferase activity and may constitute the binding site for the phosphate moiety of the glycerol-3-phosphate.</text>
</comment>
<comment type="similarity">
    <text evidence="3">Belongs to the GPAT/DAPAT family.</text>
</comment>
<feature type="transit peptide" description="Mitochondrion" evidence="2">
    <location>
        <begin position="1"/>
        <end status="unknown"/>
    </location>
</feature>
<feature type="chain" id="PRO_0000024693" description="Probable glycerol-3-phosphate acyltransferase, mitochondrial">
    <location>
        <begin status="unknown"/>
        <end position="718"/>
    </location>
</feature>
<feature type="transmembrane region" description="Helical" evidence="2">
    <location>
        <begin position="409"/>
        <end position="425"/>
    </location>
</feature>
<feature type="short sequence motif" description="HXXXXD motif">
    <location>
        <begin position="167"/>
        <end position="172"/>
    </location>
</feature>